<proteinExistence type="inferred from homology"/>
<protein>
    <recommendedName>
        <fullName evidence="1">SsrA-binding protein</fullName>
    </recommendedName>
    <alternativeName>
        <fullName evidence="1">Small protein B</fullName>
    </alternativeName>
</protein>
<dbReference type="EMBL" id="CP000513">
    <property type="protein sequence ID" value="ABQ13544.1"/>
    <property type="molecule type" value="Genomic_DNA"/>
</dbReference>
<dbReference type="RefSeq" id="WP_012031305.1">
    <property type="nucleotide sequence ID" value="NC_009446.1"/>
</dbReference>
<dbReference type="SMR" id="A5EXZ5"/>
<dbReference type="STRING" id="246195.DNO_0992"/>
<dbReference type="KEGG" id="dno:DNO_0992"/>
<dbReference type="eggNOG" id="COG0691">
    <property type="taxonomic scope" value="Bacteria"/>
</dbReference>
<dbReference type="HOGENOM" id="CLU_108953_3_0_6"/>
<dbReference type="OrthoDB" id="9805462at2"/>
<dbReference type="Proteomes" id="UP000000248">
    <property type="component" value="Chromosome"/>
</dbReference>
<dbReference type="GO" id="GO:0005829">
    <property type="term" value="C:cytosol"/>
    <property type="evidence" value="ECO:0007669"/>
    <property type="project" value="TreeGrafter"/>
</dbReference>
<dbReference type="GO" id="GO:0003723">
    <property type="term" value="F:RNA binding"/>
    <property type="evidence" value="ECO:0007669"/>
    <property type="project" value="UniProtKB-UniRule"/>
</dbReference>
<dbReference type="GO" id="GO:0070929">
    <property type="term" value="P:trans-translation"/>
    <property type="evidence" value="ECO:0007669"/>
    <property type="project" value="UniProtKB-UniRule"/>
</dbReference>
<dbReference type="CDD" id="cd09294">
    <property type="entry name" value="SmpB"/>
    <property type="match status" value="1"/>
</dbReference>
<dbReference type="Gene3D" id="2.40.280.10">
    <property type="match status" value="1"/>
</dbReference>
<dbReference type="HAMAP" id="MF_00023">
    <property type="entry name" value="SmpB"/>
    <property type="match status" value="1"/>
</dbReference>
<dbReference type="InterPro" id="IPR023620">
    <property type="entry name" value="SmpB"/>
</dbReference>
<dbReference type="InterPro" id="IPR000037">
    <property type="entry name" value="SsrA-bd_prot"/>
</dbReference>
<dbReference type="InterPro" id="IPR020081">
    <property type="entry name" value="SsrA-bd_prot_CS"/>
</dbReference>
<dbReference type="NCBIfam" id="NF003843">
    <property type="entry name" value="PRK05422.1"/>
    <property type="match status" value="1"/>
</dbReference>
<dbReference type="NCBIfam" id="TIGR00086">
    <property type="entry name" value="smpB"/>
    <property type="match status" value="1"/>
</dbReference>
<dbReference type="PANTHER" id="PTHR30308:SF2">
    <property type="entry name" value="SSRA-BINDING PROTEIN"/>
    <property type="match status" value="1"/>
</dbReference>
<dbReference type="PANTHER" id="PTHR30308">
    <property type="entry name" value="TMRNA-BINDING COMPONENT OF TRANS-TRANSLATION TAGGING COMPLEX"/>
    <property type="match status" value="1"/>
</dbReference>
<dbReference type="Pfam" id="PF01668">
    <property type="entry name" value="SmpB"/>
    <property type="match status" value="1"/>
</dbReference>
<dbReference type="SUPFAM" id="SSF74982">
    <property type="entry name" value="Small protein B (SmpB)"/>
    <property type="match status" value="1"/>
</dbReference>
<dbReference type="PROSITE" id="PS01317">
    <property type="entry name" value="SSRP"/>
    <property type="match status" value="1"/>
</dbReference>
<comment type="function">
    <text evidence="1">Required for rescue of stalled ribosomes mediated by trans-translation. Binds to transfer-messenger RNA (tmRNA), required for stable association of tmRNA with ribosomes. tmRNA and SmpB together mimic tRNA shape, replacing the anticodon stem-loop with SmpB. tmRNA is encoded by the ssrA gene; the 2 termini fold to resemble tRNA(Ala) and it encodes a 'tag peptide', a short internal open reading frame. During trans-translation Ala-aminoacylated tmRNA acts like a tRNA, entering the A-site of stalled ribosomes, displacing the stalled mRNA. The ribosome then switches to translate the ORF on the tmRNA; the nascent peptide is terminated with the 'tag peptide' encoded by the tmRNA and targeted for degradation. The ribosome is freed to recommence translation, which seems to be the essential function of trans-translation.</text>
</comment>
<comment type="subcellular location">
    <subcellularLocation>
        <location evidence="1">Cytoplasm</location>
    </subcellularLocation>
    <text evidence="1">The tmRNA-SmpB complex associates with stalled 70S ribosomes.</text>
</comment>
<comment type="similarity">
    <text evidence="1">Belongs to the SmpB family.</text>
</comment>
<evidence type="ECO:0000255" key="1">
    <source>
        <dbReference type="HAMAP-Rule" id="MF_00023"/>
    </source>
</evidence>
<keyword id="KW-0963">Cytoplasm</keyword>
<keyword id="KW-1185">Reference proteome</keyword>
<keyword id="KW-0694">RNA-binding</keyword>
<accession>A5EXZ5</accession>
<feature type="chain" id="PRO_1000002045" description="SsrA-binding protein">
    <location>
        <begin position="1"/>
        <end position="159"/>
    </location>
</feature>
<sequence>MSKKNTADNHIVTNKKVFHDYFLEEHFEAGIALEGWEVKAVRAGRIQIKESYILVKDQQVYLFGALIHPLASASSHIFPEAQRTRKLLLHRYQIAKLIGASERDGYTLMPVSLYWKNGFVKVDVAIAKGKKEFDKRQVKKDQDWKKTQSRIMKAHKRQL</sequence>
<gene>
    <name evidence="1" type="primary">smpB</name>
    <name type="ordered locus">DNO_0992</name>
</gene>
<organism>
    <name type="scientific">Dichelobacter nodosus (strain VCS1703A)</name>
    <dbReference type="NCBI Taxonomy" id="246195"/>
    <lineage>
        <taxon>Bacteria</taxon>
        <taxon>Pseudomonadati</taxon>
        <taxon>Pseudomonadota</taxon>
        <taxon>Gammaproteobacteria</taxon>
        <taxon>Cardiobacteriales</taxon>
        <taxon>Cardiobacteriaceae</taxon>
        <taxon>Dichelobacter</taxon>
    </lineage>
</organism>
<name>SSRP_DICNV</name>
<reference key="1">
    <citation type="journal article" date="2007" name="Nat. Biotechnol.">
        <title>Genome sequence and identification of candidate vaccine antigens from the animal pathogen Dichelobacter nodosus.</title>
        <authorList>
            <person name="Myers G.S.A."/>
            <person name="Parker D."/>
            <person name="Al-Hasani K."/>
            <person name="Kennan R.M."/>
            <person name="Seemann T."/>
            <person name="Ren Q."/>
            <person name="Badger J.H."/>
            <person name="Selengut J.D."/>
            <person name="Deboy R.T."/>
            <person name="Tettelin H."/>
            <person name="Boyce J.D."/>
            <person name="McCarl V.P."/>
            <person name="Han X."/>
            <person name="Nelson W.C."/>
            <person name="Madupu R."/>
            <person name="Mohamoud Y."/>
            <person name="Holley T."/>
            <person name="Fedorova N."/>
            <person name="Khouri H."/>
            <person name="Bottomley S.P."/>
            <person name="Whittington R.J."/>
            <person name="Adler B."/>
            <person name="Songer J.G."/>
            <person name="Rood J.I."/>
            <person name="Paulsen I.T."/>
        </authorList>
    </citation>
    <scope>NUCLEOTIDE SEQUENCE [LARGE SCALE GENOMIC DNA]</scope>
    <source>
        <strain>VCS1703A</strain>
    </source>
</reference>